<sequence length="73" mass="8481">MSFKKLTNVWNVQEQLSLSNATYNKNLELEKRLAKIRNEIPNKSKLIATKVDVSTQTKTVKKFTKRGFKKVLI</sequence>
<keyword id="KW-0175">Coiled coil</keyword>
<keyword id="KW-1185">Reference proteome</keyword>
<gene>
    <name type="ORF">IIV6-192R</name>
</gene>
<evidence type="ECO:0000255" key="1"/>
<accession>O55769</accession>
<dbReference type="EMBL" id="AF303741">
    <property type="protein sequence ID" value="AAB94480.1"/>
    <property type="molecule type" value="Genomic_DNA"/>
</dbReference>
<dbReference type="PIR" id="T03182">
    <property type="entry name" value="T03182"/>
</dbReference>
<dbReference type="RefSeq" id="NP_149655.1">
    <property type="nucleotide sequence ID" value="NC_003038.1"/>
</dbReference>
<dbReference type="KEGG" id="vg:1733300"/>
<dbReference type="Proteomes" id="UP000001359">
    <property type="component" value="Genome"/>
</dbReference>
<proteinExistence type="predicted"/>
<organismHost>
    <name type="scientific">Acheta domesticus</name>
    <name type="common">House cricket</name>
    <dbReference type="NCBI Taxonomy" id="6997"/>
</organismHost>
<organismHost>
    <name type="scientific">Chilo suppressalis</name>
    <name type="common">Asiatic rice borer moth</name>
    <dbReference type="NCBI Taxonomy" id="168631"/>
</organismHost>
<organismHost>
    <name type="scientific">Gryllus bimaculatus</name>
    <name type="common">Two-spotted cricket</name>
    <dbReference type="NCBI Taxonomy" id="6999"/>
</organismHost>
<organismHost>
    <name type="scientific">Gryllus campestris</name>
    <dbReference type="NCBI Taxonomy" id="58607"/>
</organismHost>
<organismHost>
    <name type="scientific">Spodoptera frugiperda</name>
    <name type="common">Fall armyworm</name>
    <dbReference type="NCBI Taxonomy" id="7108"/>
</organismHost>
<protein>
    <recommendedName>
        <fullName>Uncharacterized protein 192R</fullName>
    </recommendedName>
</protein>
<name>192R_IIV6</name>
<organism>
    <name type="scientific">Invertebrate iridescent virus 6</name>
    <name type="common">IIV-6</name>
    <name type="synonym">Chilo iridescent virus</name>
    <dbReference type="NCBI Taxonomy" id="176652"/>
    <lineage>
        <taxon>Viruses</taxon>
        <taxon>Varidnaviria</taxon>
        <taxon>Bamfordvirae</taxon>
        <taxon>Nucleocytoviricota</taxon>
        <taxon>Megaviricetes</taxon>
        <taxon>Pimascovirales</taxon>
        <taxon>Iridoviridae</taxon>
        <taxon>Betairidovirinae</taxon>
        <taxon>Iridovirus</taxon>
    </lineage>
</organism>
<feature type="chain" id="PRO_0000378020" description="Uncharacterized protein 192R">
    <location>
        <begin position="1"/>
        <end position="73"/>
    </location>
</feature>
<feature type="coiled-coil region" evidence="1">
    <location>
        <begin position="20"/>
        <end position="49"/>
    </location>
</feature>
<reference key="1">
    <citation type="journal article" date="2001" name="Virology">
        <title>Analysis of the first complete DNA sequence of an invertebrate iridovirus: coding strategy of the genome of Chilo iridescent virus.</title>
        <authorList>
            <person name="Jakob N.J."/>
            <person name="Mueller K."/>
            <person name="Bahr U."/>
            <person name="Darai G."/>
        </authorList>
    </citation>
    <scope>NUCLEOTIDE SEQUENCE [LARGE SCALE GENOMIC DNA]</scope>
</reference>
<reference key="2">
    <citation type="journal article" date="2007" name="Virol. J.">
        <title>Comparative genomic analysis of the family Iridoviridae: re-annotating and defining the core set of iridovirus genes.</title>
        <authorList>
            <person name="Eaton H.E."/>
            <person name="Metcalf J."/>
            <person name="Penny E."/>
            <person name="Tcherepanov V."/>
            <person name="Upton C."/>
            <person name="Brunetti C.R."/>
        </authorList>
    </citation>
    <scope>GENOME REANNOTATION</scope>
</reference>